<organism>
    <name type="scientific">Pseudomonas putida (strain W619)</name>
    <dbReference type="NCBI Taxonomy" id="390235"/>
    <lineage>
        <taxon>Bacteria</taxon>
        <taxon>Pseudomonadati</taxon>
        <taxon>Pseudomonadota</taxon>
        <taxon>Gammaproteobacteria</taxon>
        <taxon>Pseudomonadales</taxon>
        <taxon>Pseudomonadaceae</taxon>
        <taxon>Pseudomonas</taxon>
    </lineage>
</organism>
<comment type="function">
    <text evidence="1">Binds directly to 23S ribosomal RNA and is necessary for the in vitro assembly process of the 50S ribosomal subunit. It is not involved in the protein synthesizing functions of that subunit.</text>
</comment>
<comment type="similarity">
    <text evidence="1">Belongs to the bacterial ribosomal protein bL20 family.</text>
</comment>
<gene>
    <name evidence="1" type="primary">rplT</name>
    <name type="ordered locus">PputW619_1970</name>
</gene>
<evidence type="ECO:0000255" key="1">
    <source>
        <dbReference type="HAMAP-Rule" id="MF_00382"/>
    </source>
</evidence>
<evidence type="ECO:0000305" key="2"/>
<name>RL20_PSEPW</name>
<sequence length="118" mass="13280">MARVKRGVIARKRHKKILKLAKGYYGARSRVFRVAKQAVIKAGQYAYRDRRQKKRQFRALWIARINAGARTNGLSYSRLIAGLKKASIEIDRKVLADLAVNEKAAFAAIVEKAKAVLA</sequence>
<keyword id="KW-0687">Ribonucleoprotein</keyword>
<keyword id="KW-0689">Ribosomal protein</keyword>
<keyword id="KW-0694">RNA-binding</keyword>
<keyword id="KW-0699">rRNA-binding</keyword>
<feature type="chain" id="PRO_1000122357" description="Large ribosomal subunit protein bL20">
    <location>
        <begin position="1"/>
        <end position="118"/>
    </location>
</feature>
<protein>
    <recommendedName>
        <fullName evidence="1">Large ribosomal subunit protein bL20</fullName>
    </recommendedName>
    <alternativeName>
        <fullName evidence="2">50S ribosomal protein L20</fullName>
    </alternativeName>
</protein>
<accession>B1J6U7</accession>
<dbReference type="EMBL" id="CP000949">
    <property type="protein sequence ID" value="ACA72473.1"/>
    <property type="molecule type" value="Genomic_DNA"/>
</dbReference>
<dbReference type="SMR" id="B1J6U7"/>
<dbReference type="STRING" id="390235.PputW619_1970"/>
<dbReference type="KEGG" id="ppw:PputW619_1970"/>
<dbReference type="eggNOG" id="COG0292">
    <property type="taxonomic scope" value="Bacteria"/>
</dbReference>
<dbReference type="HOGENOM" id="CLU_123265_0_1_6"/>
<dbReference type="OrthoDB" id="9808966at2"/>
<dbReference type="GO" id="GO:1990904">
    <property type="term" value="C:ribonucleoprotein complex"/>
    <property type="evidence" value="ECO:0007669"/>
    <property type="project" value="UniProtKB-KW"/>
</dbReference>
<dbReference type="GO" id="GO:0005840">
    <property type="term" value="C:ribosome"/>
    <property type="evidence" value="ECO:0007669"/>
    <property type="project" value="UniProtKB-KW"/>
</dbReference>
<dbReference type="GO" id="GO:0019843">
    <property type="term" value="F:rRNA binding"/>
    <property type="evidence" value="ECO:0007669"/>
    <property type="project" value="UniProtKB-UniRule"/>
</dbReference>
<dbReference type="GO" id="GO:0003735">
    <property type="term" value="F:structural constituent of ribosome"/>
    <property type="evidence" value="ECO:0007669"/>
    <property type="project" value="InterPro"/>
</dbReference>
<dbReference type="GO" id="GO:0000027">
    <property type="term" value="P:ribosomal large subunit assembly"/>
    <property type="evidence" value="ECO:0007669"/>
    <property type="project" value="UniProtKB-UniRule"/>
</dbReference>
<dbReference type="GO" id="GO:0006412">
    <property type="term" value="P:translation"/>
    <property type="evidence" value="ECO:0007669"/>
    <property type="project" value="InterPro"/>
</dbReference>
<dbReference type="CDD" id="cd07026">
    <property type="entry name" value="Ribosomal_L20"/>
    <property type="match status" value="1"/>
</dbReference>
<dbReference type="FunFam" id="1.10.1900.20:FF:000001">
    <property type="entry name" value="50S ribosomal protein L20"/>
    <property type="match status" value="1"/>
</dbReference>
<dbReference type="Gene3D" id="6.10.160.10">
    <property type="match status" value="1"/>
</dbReference>
<dbReference type="Gene3D" id="1.10.1900.20">
    <property type="entry name" value="Ribosomal protein L20"/>
    <property type="match status" value="1"/>
</dbReference>
<dbReference type="HAMAP" id="MF_00382">
    <property type="entry name" value="Ribosomal_bL20"/>
    <property type="match status" value="1"/>
</dbReference>
<dbReference type="InterPro" id="IPR005813">
    <property type="entry name" value="Ribosomal_bL20"/>
</dbReference>
<dbReference type="InterPro" id="IPR049946">
    <property type="entry name" value="RIBOSOMAL_L20_CS"/>
</dbReference>
<dbReference type="InterPro" id="IPR035566">
    <property type="entry name" value="Ribosomal_protein_bL20_C"/>
</dbReference>
<dbReference type="NCBIfam" id="TIGR01032">
    <property type="entry name" value="rplT_bact"/>
    <property type="match status" value="1"/>
</dbReference>
<dbReference type="PANTHER" id="PTHR10986">
    <property type="entry name" value="39S RIBOSOMAL PROTEIN L20"/>
    <property type="match status" value="1"/>
</dbReference>
<dbReference type="Pfam" id="PF00453">
    <property type="entry name" value="Ribosomal_L20"/>
    <property type="match status" value="1"/>
</dbReference>
<dbReference type="PRINTS" id="PR00062">
    <property type="entry name" value="RIBOSOMALL20"/>
</dbReference>
<dbReference type="SUPFAM" id="SSF74731">
    <property type="entry name" value="Ribosomal protein L20"/>
    <property type="match status" value="1"/>
</dbReference>
<dbReference type="PROSITE" id="PS00937">
    <property type="entry name" value="RIBOSOMAL_L20"/>
    <property type="match status" value="1"/>
</dbReference>
<proteinExistence type="inferred from homology"/>
<reference key="1">
    <citation type="submission" date="2008-02" db="EMBL/GenBank/DDBJ databases">
        <title>Complete sequence of Pseudomonas putida W619.</title>
        <authorList>
            <person name="Copeland A."/>
            <person name="Lucas S."/>
            <person name="Lapidus A."/>
            <person name="Barry K."/>
            <person name="Detter J.C."/>
            <person name="Glavina del Rio T."/>
            <person name="Dalin E."/>
            <person name="Tice H."/>
            <person name="Pitluck S."/>
            <person name="Chain P."/>
            <person name="Malfatti S."/>
            <person name="Shin M."/>
            <person name="Vergez L."/>
            <person name="Schmutz J."/>
            <person name="Larimer F."/>
            <person name="Land M."/>
            <person name="Hauser L."/>
            <person name="Kyrpides N."/>
            <person name="Kim E."/>
            <person name="Taghavi S."/>
            <person name="Vangronsveld D."/>
            <person name="van der Lelie D."/>
            <person name="Richardson P."/>
        </authorList>
    </citation>
    <scope>NUCLEOTIDE SEQUENCE [LARGE SCALE GENOMIC DNA]</scope>
    <source>
        <strain>W619</strain>
    </source>
</reference>